<keyword id="KW-0004">4Fe-4S</keyword>
<keyword id="KW-0408">Iron</keyword>
<keyword id="KW-0411">Iron-sulfur</keyword>
<keyword id="KW-0456">Lyase</keyword>
<keyword id="KW-0479">Metal-binding</keyword>
<keyword id="KW-1185">Reference proteome</keyword>
<keyword id="KW-0949">S-adenosyl-L-methionine</keyword>
<keyword id="KW-0784">Thiamine biosynthesis</keyword>
<keyword id="KW-0862">Zinc</keyword>
<protein>
    <recommendedName>
        <fullName evidence="1">Phosphomethylpyrimidine synthase</fullName>
        <ecNumber evidence="1">4.1.99.17</ecNumber>
    </recommendedName>
    <alternativeName>
        <fullName evidence="1">Hydroxymethylpyrimidine phosphate synthase</fullName>
        <shortName evidence="1">HMP-P synthase</shortName>
        <shortName evidence="1">HMP-phosphate synthase</shortName>
        <shortName evidence="1">HMPP synthase</shortName>
    </alternativeName>
    <alternativeName>
        <fullName evidence="1">Thiamine biosynthesis protein ThiC</fullName>
    </alternativeName>
</protein>
<sequence length="643" mass="71140">MNANPKFLSADARVDAAAVAPLPNSRKVYVTGSQPDIRVPMREITQADTPTSFGGEKNPPIYVYDTSGPYTDPDAKIDIRAGLPALRQRWIDARGDTETLSGLTSDYGRERAADPATAELRFPGLHRHPRRAKAGKNVTQMHYARQGIITPEMEYIAIRENQRRAEYLESLKASGPNGAKLAAMMGRQHAGQAFGAAAFGANAPAEITPEFVRDEVARGRAIIPANINHPETEPMIIGRNFLVKINANIGNSAVTSSIGEEVDKMTWAIRWGGDTVMDLSTGKHIHETREWIIRNSPVPIGTVPIYQALEKVNGKAEDLTWEIFRDTLIEQAEQGVDYFTIHAGVRLQYVPLTANRMTGIVSRGGSIMAKWCLAHHKESFLYEHFEEICEIMKAYDVSFSLGDGLRPGSIYDANDEAQLGELKTLGELTQIAWKHDVQVMIEGPGHVPMQLIKENMDLQLDWCKEAPFYTLGPLTTDIAPGYDHITSGIGAAMIGWFGTAMLCYVTPKEHLGLPNKDDVKEGIITYKLAAHAADLAKGHPGAQVRDNALSKARFEFRWQDQFNLGLDPDKAREFHDETLPKDSAKVAHFCSMCGPHFCSMKITQDVREFAAQQGVSENDALKKGMEVKAVEFVKSGSEIYHRQ</sequence>
<accession>Q62FE9</accession>
<feature type="chain" id="PRO_0000242245" description="Phosphomethylpyrimidine synthase">
    <location>
        <begin position="1"/>
        <end position="643"/>
    </location>
</feature>
<feature type="binding site" evidence="1">
    <location>
        <position position="248"/>
    </location>
    <ligand>
        <name>substrate</name>
    </ligand>
</feature>
<feature type="binding site" evidence="1">
    <location>
        <position position="277"/>
    </location>
    <ligand>
        <name>substrate</name>
    </ligand>
</feature>
<feature type="binding site" evidence="1">
    <location>
        <position position="306"/>
    </location>
    <ligand>
        <name>substrate</name>
    </ligand>
</feature>
<feature type="binding site" evidence="1">
    <location>
        <position position="342"/>
    </location>
    <ligand>
        <name>substrate</name>
    </ligand>
</feature>
<feature type="binding site" evidence="1">
    <location>
        <begin position="362"/>
        <end position="364"/>
    </location>
    <ligand>
        <name>substrate</name>
    </ligand>
</feature>
<feature type="binding site" evidence="1">
    <location>
        <begin position="403"/>
        <end position="406"/>
    </location>
    <ligand>
        <name>substrate</name>
    </ligand>
</feature>
<feature type="binding site" evidence="1">
    <location>
        <position position="442"/>
    </location>
    <ligand>
        <name>substrate</name>
    </ligand>
</feature>
<feature type="binding site" evidence="1">
    <location>
        <position position="446"/>
    </location>
    <ligand>
        <name>Zn(2+)</name>
        <dbReference type="ChEBI" id="CHEBI:29105"/>
    </ligand>
</feature>
<feature type="binding site" evidence="1">
    <location>
        <position position="469"/>
    </location>
    <ligand>
        <name>substrate</name>
    </ligand>
</feature>
<feature type="binding site" evidence="1">
    <location>
        <position position="510"/>
    </location>
    <ligand>
        <name>Zn(2+)</name>
        <dbReference type="ChEBI" id="CHEBI:29105"/>
    </ligand>
</feature>
<feature type="binding site" evidence="1">
    <location>
        <position position="590"/>
    </location>
    <ligand>
        <name>[4Fe-4S] cluster</name>
        <dbReference type="ChEBI" id="CHEBI:49883"/>
        <note>4Fe-4S-S-AdoMet</note>
    </ligand>
</feature>
<feature type="binding site" evidence="1">
    <location>
        <position position="593"/>
    </location>
    <ligand>
        <name>[4Fe-4S] cluster</name>
        <dbReference type="ChEBI" id="CHEBI:49883"/>
        <note>4Fe-4S-S-AdoMet</note>
    </ligand>
</feature>
<feature type="binding site" evidence="1">
    <location>
        <position position="598"/>
    </location>
    <ligand>
        <name>[4Fe-4S] cluster</name>
        <dbReference type="ChEBI" id="CHEBI:49883"/>
        <note>4Fe-4S-S-AdoMet</note>
    </ligand>
</feature>
<dbReference type="EC" id="4.1.99.17" evidence="1"/>
<dbReference type="EMBL" id="CP000010">
    <property type="protein sequence ID" value="AAU48076.1"/>
    <property type="molecule type" value="Genomic_DNA"/>
</dbReference>
<dbReference type="RefSeq" id="WP_004193963.1">
    <property type="nucleotide sequence ID" value="NC_006348.1"/>
</dbReference>
<dbReference type="RefSeq" id="YP_104578.1">
    <property type="nucleotide sequence ID" value="NC_006348.1"/>
</dbReference>
<dbReference type="SMR" id="Q62FE9"/>
<dbReference type="GeneID" id="92980758"/>
<dbReference type="KEGG" id="bma:BMA3090"/>
<dbReference type="PATRIC" id="fig|243160.12.peg.3167"/>
<dbReference type="eggNOG" id="COG0422">
    <property type="taxonomic scope" value="Bacteria"/>
</dbReference>
<dbReference type="HOGENOM" id="CLU_013181_2_1_4"/>
<dbReference type="UniPathway" id="UPA00060"/>
<dbReference type="Proteomes" id="UP000006693">
    <property type="component" value="Chromosome 1"/>
</dbReference>
<dbReference type="GO" id="GO:0005829">
    <property type="term" value="C:cytosol"/>
    <property type="evidence" value="ECO:0007669"/>
    <property type="project" value="TreeGrafter"/>
</dbReference>
<dbReference type="GO" id="GO:0051539">
    <property type="term" value="F:4 iron, 4 sulfur cluster binding"/>
    <property type="evidence" value="ECO:0007669"/>
    <property type="project" value="UniProtKB-KW"/>
</dbReference>
<dbReference type="GO" id="GO:0016830">
    <property type="term" value="F:carbon-carbon lyase activity"/>
    <property type="evidence" value="ECO:0007669"/>
    <property type="project" value="InterPro"/>
</dbReference>
<dbReference type="GO" id="GO:0008270">
    <property type="term" value="F:zinc ion binding"/>
    <property type="evidence" value="ECO:0007669"/>
    <property type="project" value="UniProtKB-UniRule"/>
</dbReference>
<dbReference type="GO" id="GO:0009228">
    <property type="term" value="P:thiamine biosynthetic process"/>
    <property type="evidence" value="ECO:0007669"/>
    <property type="project" value="UniProtKB-KW"/>
</dbReference>
<dbReference type="GO" id="GO:0009229">
    <property type="term" value="P:thiamine diphosphate biosynthetic process"/>
    <property type="evidence" value="ECO:0007669"/>
    <property type="project" value="UniProtKB-UniRule"/>
</dbReference>
<dbReference type="FunFam" id="3.20.20.540:FF:000001">
    <property type="entry name" value="Phosphomethylpyrimidine synthase"/>
    <property type="match status" value="1"/>
</dbReference>
<dbReference type="Gene3D" id="6.10.250.620">
    <property type="match status" value="1"/>
</dbReference>
<dbReference type="Gene3D" id="3.20.20.540">
    <property type="entry name" value="Radical SAM ThiC family, central domain"/>
    <property type="match status" value="1"/>
</dbReference>
<dbReference type="HAMAP" id="MF_00089">
    <property type="entry name" value="ThiC"/>
    <property type="match status" value="1"/>
</dbReference>
<dbReference type="InterPro" id="IPR037509">
    <property type="entry name" value="ThiC"/>
</dbReference>
<dbReference type="InterPro" id="IPR025747">
    <property type="entry name" value="ThiC-associated_dom"/>
</dbReference>
<dbReference type="InterPro" id="IPR038521">
    <property type="entry name" value="ThiC/Bza_core_dom"/>
</dbReference>
<dbReference type="InterPro" id="IPR002817">
    <property type="entry name" value="ThiC/BzaA/B"/>
</dbReference>
<dbReference type="NCBIfam" id="NF006763">
    <property type="entry name" value="PRK09284.1"/>
    <property type="match status" value="1"/>
</dbReference>
<dbReference type="NCBIfam" id="NF009895">
    <property type="entry name" value="PRK13352.1"/>
    <property type="match status" value="1"/>
</dbReference>
<dbReference type="NCBIfam" id="TIGR00190">
    <property type="entry name" value="thiC"/>
    <property type="match status" value="1"/>
</dbReference>
<dbReference type="PANTHER" id="PTHR30557:SF1">
    <property type="entry name" value="PHOSPHOMETHYLPYRIMIDINE SYNTHASE, CHLOROPLASTIC"/>
    <property type="match status" value="1"/>
</dbReference>
<dbReference type="PANTHER" id="PTHR30557">
    <property type="entry name" value="THIAMINE BIOSYNTHESIS PROTEIN THIC"/>
    <property type="match status" value="1"/>
</dbReference>
<dbReference type="Pfam" id="PF13667">
    <property type="entry name" value="ThiC-associated"/>
    <property type="match status" value="1"/>
</dbReference>
<dbReference type="Pfam" id="PF01964">
    <property type="entry name" value="ThiC_Rad_SAM"/>
    <property type="match status" value="1"/>
</dbReference>
<dbReference type="SFLD" id="SFLDF00407">
    <property type="entry name" value="phosphomethylpyrimidine_syntha"/>
    <property type="match status" value="1"/>
</dbReference>
<dbReference type="SFLD" id="SFLDG01114">
    <property type="entry name" value="phosphomethylpyrimidine_syntha"/>
    <property type="match status" value="1"/>
</dbReference>
<dbReference type="SFLD" id="SFLDS00113">
    <property type="entry name" value="Radical_SAM_Phosphomethylpyrim"/>
    <property type="match status" value="1"/>
</dbReference>
<reference key="1">
    <citation type="journal article" date="2004" name="Proc. Natl. Acad. Sci. U.S.A.">
        <title>Structural flexibility in the Burkholderia mallei genome.</title>
        <authorList>
            <person name="Nierman W.C."/>
            <person name="DeShazer D."/>
            <person name="Kim H.S."/>
            <person name="Tettelin H."/>
            <person name="Nelson K.E."/>
            <person name="Feldblyum T.V."/>
            <person name="Ulrich R.L."/>
            <person name="Ronning C.M."/>
            <person name="Brinkac L.M."/>
            <person name="Daugherty S.C."/>
            <person name="Davidsen T.D."/>
            <person name="DeBoy R.T."/>
            <person name="Dimitrov G."/>
            <person name="Dodson R.J."/>
            <person name="Durkin A.S."/>
            <person name="Gwinn M.L."/>
            <person name="Haft D.H."/>
            <person name="Khouri H.M."/>
            <person name="Kolonay J.F."/>
            <person name="Madupu R."/>
            <person name="Mohammoud Y."/>
            <person name="Nelson W.C."/>
            <person name="Radune D."/>
            <person name="Romero C.M."/>
            <person name="Sarria S."/>
            <person name="Selengut J."/>
            <person name="Shamblin C."/>
            <person name="Sullivan S.A."/>
            <person name="White O."/>
            <person name="Yu Y."/>
            <person name="Zafar N."/>
            <person name="Zhou L."/>
            <person name="Fraser C.M."/>
        </authorList>
    </citation>
    <scope>NUCLEOTIDE SEQUENCE [LARGE SCALE GENOMIC DNA]</scope>
    <source>
        <strain>ATCC 23344</strain>
    </source>
</reference>
<name>THIC_BURMA</name>
<proteinExistence type="inferred from homology"/>
<organism>
    <name type="scientific">Burkholderia mallei (strain ATCC 23344)</name>
    <dbReference type="NCBI Taxonomy" id="243160"/>
    <lineage>
        <taxon>Bacteria</taxon>
        <taxon>Pseudomonadati</taxon>
        <taxon>Pseudomonadota</taxon>
        <taxon>Betaproteobacteria</taxon>
        <taxon>Burkholderiales</taxon>
        <taxon>Burkholderiaceae</taxon>
        <taxon>Burkholderia</taxon>
        <taxon>pseudomallei group</taxon>
    </lineage>
</organism>
<gene>
    <name evidence="1" type="primary">thiC</name>
    <name type="ordered locus">BMA3090</name>
</gene>
<comment type="function">
    <text evidence="1">Catalyzes the synthesis of the hydroxymethylpyrimidine phosphate (HMP-P) moiety of thiamine from aminoimidazole ribotide (AIR) in a radical S-adenosyl-L-methionine (SAM)-dependent reaction.</text>
</comment>
<comment type="catalytic activity">
    <reaction evidence="1">
        <text>5-amino-1-(5-phospho-beta-D-ribosyl)imidazole + S-adenosyl-L-methionine = 4-amino-2-methyl-5-(phosphooxymethyl)pyrimidine + CO + 5'-deoxyadenosine + formate + L-methionine + 3 H(+)</text>
        <dbReference type="Rhea" id="RHEA:24840"/>
        <dbReference type="ChEBI" id="CHEBI:15378"/>
        <dbReference type="ChEBI" id="CHEBI:15740"/>
        <dbReference type="ChEBI" id="CHEBI:17245"/>
        <dbReference type="ChEBI" id="CHEBI:17319"/>
        <dbReference type="ChEBI" id="CHEBI:57844"/>
        <dbReference type="ChEBI" id="CHEBI:58354"/>
        <dbReference type="ChEBI" id="CHEBI:59789"/>
        <dbReference type="ChEBI" id="CHEBI:137981"/>
        <dbReference type="EC" id="4.1.99.17"/>
    </reaction>
</comment>
<comment type="cofactor">
    <cofactor evidence="1">
        <name>[4Fe-4S] cluster</name>
        <dbReference type="ChEBI" id="CHEBI:49883"/>
    </cofactor>
    <text evidence="1">Binds 1 [4Fe-4S] cluster per subunit. The cluster is coordinated with 3 cysteines and an exchangeable S-adenosyl-L-methionine.</text>
</comment>
<comment type="pathway">
    <text evidence="1">Cofactor biosynthesis; thiamine diphosphate biosynthesis.</text>
</comment>
<comment type="subunit">
    <text evidence="1">Homodimer.</text>
</comment>
<comment type="similarity">
    <text evidence="1">Belongs to the ThiC family.</text>
</comment>
<evidence type="ECO:0000255" key="1">
    <source>
        <dbReference type="HAMAP-Rule" id="MF_00089"/>
    </source>
</evidence>